<keyword id="KW-0025">Alternative splicing</keyword>
<keyword id="KW-0217">Developmental protein</keyword>
<keyword id="KW-0221">Differentiation</keyword>
<keyword id="KW-0238">DNA-binding</keyword>
<keyword id="KW-0479">Metal-binding</keyword>
<keyword id="KW-0539">Nucleus</keyword>
<keyword id="KW-1185">Reference proteome</keyword>
<keyword id="KW-0677">Repeat</keyword>
<keyword id="KW-0726">Sexual differentiation</keyword>
<keyword id="KW-0804">Transcription</keyword>
<keyword id="KW-0805">Transcription regulation</keyword>
<keyword id="KW-0862">Zinc</keyword>
<dbReference type="EMBL" id="BX284605">
    <property type="protein sequence ID" value="CAA21612.2"/>
    <property type="molecule type" value="Genomic_DNA"/>
</dbReference>
<dbReference type="EMBL" id="BX284605">
    <property type="protein sequence ID" value="CBG22749.1"/>
    <property type="molecule type" value="Genomic_DNA"/>
</dbReference>
<dbReference type="PIR" id="T26871">
    <property type="entry name" value="T26871"/>
</dbReference>
<dbReference type="RefSeq" id="NP_001256882.1">
    <molecule id="Q9XWN9-1"/>
    <property type="nucleotide sequence ID" value="NM_001269953.2"/>
</dbReference>
<dbReference type="RefSeq" id="NP_001256883.1">
    <molecule id="Q9XWN9-2"/>
    <property type="nucleotide sequence ID" value="NM_001269954.4"/>
</dbReference>
<dbReference type="SMR" id="Q9XWN9"/>
<dbReference type="FunCoup" id="Q9XWN9">
    <property type="interactions" value="267"/>
</dbReference>
<dbReference type="IntAct" id="Q9XWN9">
    <property type="interactions" value="2"/>
</dbReference>
<dbReference type="STRING" id="6239.Y43F8C.10a.1"/>
<dbReference type="PaxDb" id="6239-Y43F8C.10a"/>
<dbReference type="EnsemblMetazoa" id="Y43F8C.10a.1">
    <molecule id="Q9XWN9-1"/>
    <property type="protein sequence ID" value="Y43F8C.10a.1"/>
    <property type="gene ID" value="WBGene00012832"/>
</dbReference>
<dbReference type="EnsemblMetazoa" id="Y43F8C.10b.1">
    <molecule id="Q9XWN9-2"/>
    <property type="protein sequence ID" value="Y43F8C.10b.1"/>
    <property type="gene ID" value="WBGene00012832"/>
</dbReference>
<dbReference type="GeneID" id="189878"/>
<dbReference type="KEGG" id="cel:CELE_Y43F8C.10"/>
<dbReference type="UCSC" id="Y43F8C.10">
    <molecule id="Q9XWN9-1"/>
    <property type="organism name" value="c. elegans"/>
</dbReference>
<dbReference type="AGR" id="WB:WBGene00012832"/>
<dbReference type="CTD" id="189878"/>
<dbReference type="WormBase" id="Y43F8C.10a">
    <molecule id="Q9XWN9-1"/>
    <property type="protein sequence ID" value="CE39835"/>
    <property type="gene ID" value="WBGene00012832"/>
    <property type="gene designation" value="dmd-3"/>
</dbReference>
<dbReference type="WormBase" id="Y43F8C.10b">
    <molecule id="Q9XWN9-2"/>
    <property type="protein sequence ID" value="CE44151"/>
    <property type="gene ID" value="WBGene00012832"/>
    <property type="gene designation" value="dmd-3"/>
</dbReference>
<dbReference type="eggNOG" id="KOG3815">
    <property type="taxonomic scope" value="Eukaryota"/>
</dbReference>
<dbReference type="HOGENOM" id="CLU_122995_0_0_1"/>
<dbReference type="InParanoid" id="Q9XWN9"/>
<dbReference type="OMA" id="CIMVERR"/>
<dbReference type="OrthoDB" id="6162476at2759"/>
<dbReference type="PhylomeDB" id="Q9XWN9"/>
<dbReference type="PRO" id="PR:Q9XWN9"/>
<dbReference type="Proteomes" id="UP000001940">
    <property type="component" value="Chromosome V"/>
</dbReference>
<dbReference type="Bgee" id="WBGene00012832">
    <property type="expression patterns" value="Expressed in larva and 2 other cell types or tissues"/>
</dbReference>
<dbReference type="GO" id="GO:0043025">
    <property type="term" value="C:neuronal cell body"/>
    <property type="evidence" value="ECO:0000314"/>
    <property type="project" value="UniProtKB"/>
</dbReference>
<dbReference type="GO" id="GO:0005634">
    <property type="term" value="C:nucleus"/>
    <property type="evidence" value="ECO:0007669"/>
    <property type="project" value="UniProtKB-SubCell"/>
</dbReference>
<dbReference type="GO" id="GO:0043204">
    <property type="term" value="C:perikaryon"/>
    <property type="evidence" value="ECO:0007669"/>
    <property type="project" value="UniProtKB-SubCell"/>
</dbReference>
<dbReference type="GO" id="GO:0046872">
    <property type="term" value="F:metal ion binding"/>
    <property type="evidence" value="ECO:0007669"/>
    <property type="project" value="UniProtKB-KW"/>
</dbReference>
<dbReference type="GO" id="GO:0043565">
    <property type="term" value="F:sequence-specific DNA binding"/>
    <property type="evidence" value="ECO:0007669"/>
    <property type="project" value="InterPro"/>
</dbReference>
<dbReference type="GO" id="GO:0048675">
    <property type="term" value="P:axon extension"/>
    <property type="evidence" value="ECO:0000315"/>
    <property type="project" value="UniProtKB"/>
</dbReference>
<dbReference type="GO" id="GO:0010629">
    <property type="term" value="P:negative regulation of gene expression"/>
    <property type="evidence" value="ECO:0000315"/>
    <property type="project" value="UniProtKB"/>
</dbReference>
<dbReference type="GO" id="GO:0045138">
    <property type="term" value="P:nematode male tail tip morphogenesis"/>
    <property type="evidence" value="ECO:0000315"/>
    <property type="project" value="WormBase"/>
</dbReference>
<dbReference type="GO" id="GO:0048664">
    <property type="term" value="P:neuron fate determination"/>
    <property type="evidence" value="ECO:0000315"/>
    <property type="project" value="UniProtKB"/>
</dbReference>
<dbReference type="GO" id="GO:0110039">
    <property type="term" value="P:positive regulation of nematode male tail tip morphogenesis"/>
    <property type="evidence" value="ECO:0000315"/>
    <property type="project" value="UniProtKB"/>
</dbReference>
<dbReference type="GO" id="GO:0045944">
    <property type="term" value="P:positive regulation of transcription by RNA polymerase II"/>
    <property type="evidence" value="ECO:0000315"/>
    <property type="project" value="WormBase"/>
</dbReference>
<dbReference type="GO" id="GO:1902435">
    <property type="term" value="P:regulation of male mating behavior"/>
    <property type="evidence" value="ECO:0000315"/>
    <property type="project" value="UniProtKB"/>
</dbReference>
<dbReference type="GO" id="GO:0110037">
    <property type="term" value="P:regulation of nematode male tail tip morphogenesis"/>
    <property type="evidence" value="ECO:0000315"/>
    <property type="project" value="UniProtKB"/>
</dbReference>
<dbReference type="FunFam" id="4.10.1040.10:FF:000001">
    <property type="entry name" value="doublesex- and mab-3-related transcription factor 1"/>
    <property type="match status" value="1"/>
</dbReference>
<dbReference type="Gene3D" id="4.10.1040.10">
    <property type="entry name" value="DM DNA-binding domain"/>
    <property type="match status" value="2"/>
</dbReference>
<dbReference type="InterPro" id="IPR001275">
    <property type="entry name" value="DM_DNA-bd"/>
</dbReference>
<dbReference type="InterPro" id="IPR036407">
    <property type="entry name" value="DM_DNA-bd_sf"/>
</dbReference>
<dbReference type="InterPro" id="IPR026607">
    <property type="entry name" value="DMRT"/>
</dbReference>
<dbReference type="PANTHER" id="PTHR12322">
    <property type="entry name" value="DOUBLESEX AND MAB-3 RELATED TRANSCRIPTION FACTOR DMRT"/>
    <property type="match status" value="1"/>
</dbReference>
<dbReference type="PANTHER" id="PTHR12322:SF53">
    <property type="entry name" value="DOUBLESEX-MAB RELATED 11E"/>
    <property type="match status" value="1"/>
</dbReference>
<dbReference type="Pfam" id="PF00751">
    <property type="entry name" value="DM"/>
    <property type="match status" value="2"/>
</dbReference>
<dbReference type="SMART" id="SM00301">
    <property type="entry name" value="DM"/>
    <property type="match status" value="2"/>
</dbReference>
<dbReference type="SUPFAM" id="SSF82927">
    <property type="entry name" value="Cysteine-rich DNA binding domain, (DM domain)"/>
    <property type="match status" value="2"/>
</dbReference>
<dbReference type="PROSITE" id="PS40000">
    <property type="entry name" value="DM_1"/>
    <property type="match status" value="2"/>
</dbReference>
<dbReference type="PROSITE" id="PS50809">
    <property type="entry name" value="DM_2"/>
    <property type="match status" value="2"/>
</dbReference>
<name>DMD3_CAEEL</name>
<organism evidence="11">
    <name type="scientific">Caenorhabditis elegans</name>
    <dbReference type="NCBI Taxonomy" id="6239"/>
    <lineage>
        <taxon>Eukaryota</taxon>
        <taxon>Metazoa</taxon>
        <taxon>Ecdysozoa</taxon>
        <taxon>Nematoda</taxon>
        <taxon>Chromadorea</taxon>
        <taxon>Rhabditida</taxon>
        <taxon>Rhabditina</taxon>
        <taxon>Rhabditomorpha</taxon>
        <taxon>Rhabditoidea</taxon>
        <taxon>Rhabditidae</taxon>
        <taxon>Peloderinae</taxon>
        <taxon>Caenorhabditis</taxon>
    </lineage>
</organism>
<proteinExistence type="evidence at transcript level"/>
<feature type="chain" id="PRO_0000448063" description="Doublesex- and mab-3-related transcription factor dmd-3">
    <location>
        <begin position="1"/>
        <end position="250"/>
    </location>
</feature>
<feature type="DNA-binding region" description="DM 1" evidence="1">
    <location>
        <begin position="19"/>
        <end position="68"/>
    </location>
</feature>
<feature type="DNA-binding region" description="DM 2" evidence="1">
    <location>
        <begin position="117"/>
        <end position="164"/>
    </location>
</feature>
<feature type="region of interest" description="Disordered" evidence="2">
    <location>
        <begin position="90"/>
        <end position="115"/>
    </location>
</feature>
<feature type="region of interest" description="Disordered" evidence="2">
    <location>
        <begin position="166"/>
        <end position="201"/>
    </location>
</feature>
<feature type="compositionally biased region" description="Polar residues" evidence="2">
    <location>
        <begin position="90"/>
        <end position="100"/>
    </location>
</feature>
<feature type="compositionally biased region" description="Basic and acidic residues" evidence="2">
    <location>
        <begin position="102"/>
        <end position="115"/>
    </location>
</feature>
<feature type="compositionally biased region" description="Basic and acidic residues" evidence="2">
    <location>
        <begin position="169"/>
        <end position="180"/>
    </location>
</feature>
<feature type="compositionally biased region" description="Low complexity" evidence="2">
    <location>
        <begin position="186"/>
        <end position="201"/>
    </location>
</feature>
<feature type="splice variant" id="VSP_060329" description="In isoform b." evidence="10">
    <original>MNIEEILPELFGEKRVYYCQRCLNHGLREKRKNHKLSCTFRFCQCSNCIMVERRRQLNSRLMQIDGSRDEKPMTTLTMALTCSEEDQMECTSQSETTNESSGEDKDDGKPK</original>
    <variation>MTQTFIRLKSSVKVDRD</variation>
    <location>
        <begin position="1"/>
        <end position="111"/>
    </location>
</feature>
<sequence>MNIEEILPELFGEKRVYYCQRCLNHGLREKRKNHKLSCTFRFCQCSNCIMVERRRQLNSRLMQIDGSRDEKPMTTLTMALTCSEEDQMECTSQSETTNESSGEDKDDGKPKERRPNCQRCAQHSVVNRLKGHKRACPFRDCFCAKCQVVVERQKLMADQIKLRRRQKREKNNLNSEREAPIAHSMTPSPIDTVTTTTTPTSETSTPMCLKCAQQVIGYQQLLSLLDPSATLQDPMITLSAVLSACPHKNE</sequence>
<accession>Q9XWN9</accession>
<accession>C8TDI6</accession>
<protein>
    <recommendedName>
        <fullName evidence="10">Doublesex- and mab-3-related transcription factor dmd-3</fullName>
    </recommendedName>
    <alternativeName>
        <fullName evidence="10">Doublesex-like 3 protein homolog</fullName>
    </alternativeName>
</protein>
<reference evidence="11" key="1">
    <citation type="journal article" date="1998" name="Science">
        <title>Genome sequence of the nematode C. elegans: a platform for investigating biology.</title>
        <authorList>
            <consortium name="The C. elegans sequencing consortium"/>
        </authorList>
    </citation>
    <scope>NUCLEOTIDE SEQUENCE [LARGE SCALE GENOMIC DNA]</scope>
    <source>
        <strain evidence="11">Bristol N2</strain>
    </source>
</reference>
<reference evidence="10" key="2">
    <citation type="journal article" date="2008" name="Development">
        <title>dmd-3, a doublesex-related gene regulated by tra-1, governs sex-specific morphogenesis in C. elegans.</title>
        <authorList>
            <person name="Mason D.A."/>
            <person name="Rabinowitz J.S."/>
            <person name="Portman D.S."/>
        </authorList>
    </citation>
    <scope>FUNCTION</scope>
    <scope>TISSUE SPECIFICITY</scope>
    <scope>DEVELOPMENTAL STAGE</scope>
    <scope>REPRESSION BY LIN-41</scope>
    <scope>DISRUPTION PHENOTYPE</scope>
</reference>
<reference evidence="10" key="3">
    <citation type="journal article" date="2011" name="PLoS Genet.">
        <title>A bow-tie genetic architecture for morphogenesis suggested by a genome-wide RNAi screen in Caenorhabditis elegans.</title>
        <authorList>
            <person name="Nelson M.D."/>
            <person name="Zhou E."/>
            <person name="Kiontke K."/>
            <person name="Fradin H."/>
            <person name="Maldonado G."/>
            <person name="Martin D."/>
            <person name="Shah K."/>
            <person name="Fitch D.H."/>
        </authorList>
    </citation>
    <scope>FUNCTION</scope>
    <scope>TISSUE SPECIFICITY</scope>
</reference>
<reference evidence="10" key="4">
    <citation type="journal article" date="2011" name="PLoS ONE">
        <title>Multiple doublesex-related genes specify critical cell fates in a C. elegans male neural circuit.</title>
        <authorList>
            <person name="Siehr M.S."/>
            <person name="Koo P.K."/>
            <person name="Sherlekar A.L."/>
            <person name="Bian X."/>
            <person name="Bunkers M.R."/>
            <person name="Miller R.M."/>
            <person name="Portman D.S."/>
            <person name="Lints R."/>
        </authorList>
    </citation>
    <scope>FUNCTION</scope>
    <scope>SUBCELLULAR LOCATION</scope>
    <scope>TISSUE SPECIFICITY</scope>
</reference>
<reference evidence="10" key="5">
    <citation type="journal article" date="2017" name="Curr. Biol.">
        <title>Sexually Dimorphic Differentiation of a C. elegans Hub Neuron Is Cell Autonomously Controlled by a Conserved Transcription Factor.</title>
        <authorList>
            <person name="Serrano-Saiz E."/>
            <person name="Oren-Suissa M."/>
            <person name="Bayer E.A."/>
            <person name="Hobert O."/>
        </authorList>
    </citation>
    <scope>FUNCTION</scope>
    <scope>TISSUE SPECIFICITY</scope>
</reference>
<reference evidence="10" key="6">
    <citation type="journal article" date="2017" name="Mol. Cell">
        <title>LIN41 post-transcriptionally silences mRNAs by two distinct and position-dependent mechanisms.</title>
        <authorList>
            <person name="Aeschimann F."/>
            <person name="Kumari P."/>
            <person name="Bartake H."/>
            <person name="Gaidatzis D."/>
            <person name="Xu L."/>
            <person name="Ciosk R."/>
            <person name="Grosshans H."/>
        </authorList>
    </citation>
    <scope>REPRESSION BY LIN-41</scope>
</reference>
<reference evidence="10" key="7">
    <citation type="journal article" date="2019" name="Life. Sci Alliance">
        <title>let-7 coordinates the transition to adulthood through a single primary and four secondary targets.</title>
        <authorList>
            <person name="Aeschimann F."/>
            <person name="Neagu A."/>
            <person name="Rausch M."/>
            <person name="Grosshans H."/>
        </authorList>
    </citation>
    <scope>FUNCTION</scope>
    <scope>REPRESSION BY LIN-41</scope>
    <scope>TISSUE SPECIFICITY</scope>
</reference>
<comment type="function">
    <text evidence="3 4 5 6 8">Transcriptional activator which promotes male-specific development (PubMed:18550714, PubMed:28065609). Acts partially redundantly with the transcription factor mab-3 to coordinate tail tip cell fusion and retraction and thereby regulate male tail tip morphogenesis (PubMed:18550714, PubMed:30910805). This is most likely through the regulation of downstream effectors such as eff-1 (PubMed:18550714). May also negatively regulate the expression of other proteins implicated in male tail morphogenesis including nhr-25, vav-1 and arl-1 in tail tip cells (PubMed:21408209). In males, plays a role in the development of ray A-neurons by negatively regulating the activity of the transcription factor ast-1 (PubMed:22069471). Plays a role in the male-specific differentiation of PHC sensory neurons into densely connected hub sensory neurons (PubMed:28065609). Plays a role in male mating behavior (PubMed:22069471).</text>
</comment>
<comment type="subcellular location">
    <subcellularLocation>
        <location evidence="1">Nucleus</location>
    </subcellularLocation>
    <subcellularLocation>
        <location evidence="5">Perikaryon</location>
    </subcellularLocation>
</comment>
<comment type="alternative products">
    <event type="alternative splicing"/>
    <isoform>
        <id>Q9XWN9-1</id>
        <name evidence="12">a</name>
        <sequence type="displayed"/>
    </isoform>
    <isoform>
        <id>Q9XWN9-2</id>
        <name evidence="13">b</name>
        <sequence type="described" ref="VSP_060329"/>
    </isoform>
</comment>
<comment type="tissue specificity">
    <text evidence="3 4 5 6 8">In males, expressed in the tail tip (PubMed:18550714, PubMed:21408209, PubMed:22069471, PubMed:30910805). Specifically, expressed in 15 male-specific muscles of the tail tip called the diagonal muscles, and also in core body muscles of both males and hermaphrodites (PubMed:22069471). In males, expressed in ray A-neurons (PubMed:18550714, PubMed:22069471). In males, expressed in PHC sensory neurons (PubMed:28065609). In males, it is also expressed in the hindgut, B lineage and somatic gonad (PubMed:18550714). In hermaphrodites, expressed in the anchor cell only (PubMed:18550714).</text>
</comment>
<comment type="developmental stage">
    <text evidence="3">Expressed in cells of the male tail tip from the L3 larval stage. Expression peaks during male tail tip retraction and decreases rapidly upon completion (PubMed:18550714). Not expressed in cells of the hermaphrodite tail tip at any developmental stage (PubMed:18550714).</text>
</comment>
<comment type="induction">
    <text evidence="3 7 8">Negatively regulated by lin-41 which causes degradation of the mRNA encoding this protein.</text>
</comment>
<comment type="disruption phenotype">
    <text evidence="3">RNAi-mediated knockdown results in male tail morphology defects.</text>
</comment>
<comment type="similarity">
    <text evidence="10">Belongs to the DMRT family.</text>
</comment>
<evidence type="ECO:0000255" key="1">
    <source>
        <dbReference type="PROSITE-ProRule" id="PRU00070"/>
    </source>
</evidence>
<evidence type="ECO:0000256" key="2">
    <source>
        <dbReference type="SAM" id="MobiDB-lite"/>
    </source>
</evidence>
<evidence type="ECO:0000269" key="3">
    <source>
    </source>
</evidence>
<evidence type="ECO:0000269" key="4">
    <source>
    </source>
</evidence>
<evidence type="ECO:0000269" key="5">
    <source>
    </source>
</evidence>
<evidence type="ECO:0000269" key="6">
    <source>
    </source>
</evidence>
<evidence type="ECO:0000269" key="7">
    <source>
    </source>
</evidence>
<evidence type="ECO:0000269" key="8">
    <source>
    </source>
</evidence>
<evidence type="ECO:0000303" key="9">
    <source>
    </source>
</evidence>
<evidence type="ECO:0000305" key="10"/>
<evidence type="ECO:0000312" key="11">
    <source>
        <dbReference type="Proteomes" id="UP000001940"/>
    </source>
</evidence>
<evidence type="ECO:0000312" key="12">
    <source>
        <dbReference type="WormBase" id="Y43F8C.10a"/>
    </source>
</evidence>
<evidence type="ECO:0000312" key="13">
    <source>
        <dbReference type="WormBase" id="Y43F8C.10b"/>
    </source>
</evidence>
<gene>
    <name evidence="9 12" type="primary">dmd-3</name>
    <name evidence="12" type="ORF">Y43F8C.10</name>
</gene>